<organism>
    <name type="scientific">Staphylococcus aureus (strain MRSA252)</name>
    <dbReference type="NCBI Taxonomy" id="282458"/>
    <lineage>
        <taxon>Bacteria</taxon>
        <taxon>Bacillati</taxon>
        <taxon>Bacillota</taxon>
        <taxon>Bacilli</taxon>
        <taxon>Bacillales</taxon>
        <taxon>Staphylococcaceae</taxon>
        <taxon>Staphylococcus</taxon>
    </lineage>
</organism>
<comment type="function">
    <text evidence="1">Acts on leucine, isoleucine and valine.</text>
</comment>
<comment type="catalytic activity">
    <reaction>
        <text>L-leucine + 2-oxoglutarate = 4-methyl-2-oxopentanoate + L-glutamate</text>
        <dbReference type="Rhea" id="RHEA:18321"/>
        <dbReference type="ChEBI" id="CHEBI:16810"/>
        <dbReference type="ChEBI" id="CHEBI:17865"/>
        <dbReference type="ChEBI" id="CHEBI:29985"/>
        <dbReference type="ChEBI" id="CHEBI:57427"/>
        <dbReference type="EC" id="2.6.1.42"/>
    </reaction>
</comment>
<comment type="catalytic activity">
    <reaction>
        <text>L-isoleucine + 2-oxoglutarate = (S)-3-methyl-2-oxopentanoate + L-glutamate</text>
        <dbReference type="Rhea" id="RHEA:24801"/>
        <dbReference type="ChEBI" id="CHEBI:16810"/>
        <dbReference type="ChEBI" id="CHEBI:29985"/>
        <dbReference type="ChEBI" id="CHEBI:35146"/>
        <dbReference type="ChEBI" id="CHEBI:58045"/>
        <dbReference type="EC" id="2.6.1.42"/>
    </reaction>
</comment>
<comment type="catalytic activity">
    <reaction>
        <text>L-valine + 2-oxoglutarate = 3-methyl-2-oxobutanoate + L-glutamate</text>
        <dbReference type="Rhea" id="RHEA:24813"/>
        <dbReference type="ChEBI" id="CHEBI:11851"/>
        <dbReference type="ChEBI" id="CHEBI:16810"/>
        <dbReference type="ChEBI" id="CHEBI:29985"/>
        <dbReference type="ChEBI" id="CHEBI:57762"/>
        <dbReference type="EC" id="2.6.1.42"/>
    </reaction>
</comment>
<comment type="cofactor">
    <cofactor evidence="1">
        <name>pyridoxal 5'-phosphate</name>
        <dbReference type="ChEBI" id="CHEBI:597326"/>
    </cofactor>
</comment>
<comment type="pathway">
    <text>Amino-acid biosynthesis; L-isoleucine biosynthesis; L-isoleucine from 2-oxobutanoate: step 4/4.</text>
</comment>
<comment type="pathway">
    <text>Amino-acid biosynthesis; L-leucine biosynthesis; L-leucine from 3-methyl-2-oxobutanoate: step 4/4.</text>
</comment>
<comment type="pathway">
    <text>Amino-acid biosynthesis; L-valine biosynthesis; L-valine from pyruvate: step 4/4.</text>
</comment>
<comment type="similarity">
    <text evidence="2">Belongs to the class-IV pyridoxal-phosphate-dependent aminotransferase family.</text>
</comment>
<sequence length="358" mass="40030">MSQAVKIELRETLKEKPDTSQLGFGKYFTDYMLSYDYDADKGWHDLKIVPYGPIEISPAAQGVHYGQSVFEGLKAYKKDGEVALFRPDENFKRLNNSLARLEMPQVNEGELLEGLKQLVDLEREWVPEGEGQSLYIRPFVFATEGVLGVGASHQYKLLIILSPSGAYYGGETLKPTKIYVEDEYVRAVRGGVGFAKVAGNYAASLLAQTNANKLGYDQVLWLDGVEQKYIEEVGSMNIFFVENGKVITPELNGSILPGITRKSIIELAKNLGYEVEERRVSIDELFESYDKGELTEVFGSGTAAVISPVGTLRYEDREIVINNNETGEITQKLYDVYTGIQNGTLEDKNGWRVVVPKY</sequence>
<dbReference type="EC" id="2.6.1.42"/>
<dbReference type="EMBL" id="BX571856">
    <property type="protein sequence ID" value="CAG39580.1"/>
    <property type="molecule type" value="Genomic_DNA"/>
</dbReference>
<dbReference type="RefSeq" id="WP_000076025.1">
    <property type="nucleotide sequence ID" value="NC_002952.2"/>
</dbReference>
<dbReference type="SMR" id="Q6GJB4"/>
<dbReference type="KEGG" id="sar:SAR0559"/>
<dbReference type="HOGENOM" id="CLU_031922_0_2_9"/>
<dbReference type="UniPathway" id="UPA00047">
    <property type="reaction ID" value="UER00058"/>
</dbReference>
<dbReference type="UniPathway" id="UPA00048">
    <property type="reaction ID" value="UER00073"/>
</dbReference>
<dbReference type="UniPathway" id="UPA00049">
    <property type="reaction ID" value="UER00062"/>
</dbReference>
<dbReference type="Proteomes" id="UP000000596">
    <property type="component" value="Chromosome"/>
</dbReference>
<dbReference type="GO" id="GO:0052656">
    <property type="term" value="F:L-isoleucine-2-oxoglutarate transaminase activity"/>
    <property type="evidence" value="ECO:0007669"/>
    <property type="project" value="RHEA"/>
</dbReference>
<dbReference type="GO" id="GO:0052654">
    <property type="term" value="F:L-leucine-2-oxoglutarate transaminase activity"/>
    <property type="evidence" value="ECO:0007669"/>
    <property type="project" value="RHEA"/>
</dbReference>
<dbReference type="GO" id="GO:0052655">
    <property type="term" value="F:L-valine-2-oxoglutarate transaminase activity"/>
    <property type="evidence" value="ECO:0007669"/>
    <property type="project" value="RHEA"/>
</dbReference>
<dbReference type="GO" id="GO:0009097">
    <property type="term" value="P:isoleucine biosynthetic process"/>
    <property type="evidence" value="ECO:0007669"/>
    <property type="project" value="UniProtKB-UniPathway"/>
</dbReference>
<dbReference type="GO" id="GO:0009098">
    <property type="term" value="P:L-leucine biosynthetic process"/>
    <property type="evidence" value="ECO:0007669"/>
    <property type="project" value="UniProtKB-UniPathway"/>
</dbReference>
<dbReference type="GO" id="GO:0009099">
    <property type="term" value="P:L-valine biosynthetic process"/>
    <property type="evidence" value="ECO:0007669"/>
    <property type="project" value="UniProtKB-UniPathway"/>
</dbReference>
<dbReference type="CDD" id="cd01557">
    <property type="entry name" value="BCAT_beta_family"/>
    <property type="match status" value="1"/>
</dbReference>
<dbReference type="Gene3D" id="3.30.470.10">
    <property type="match status" value="1"/>
</dbReference>
<dbReference type="Gene3D" id="3.20.10.10">
    <property type="entry name" value="D-amino Acid Aminotransferase, subunit A, domain 2"/>
    <property type="match status" value="1"/>
</dbReference>
<dbReference type="InterPro" id="IPR001544">
    <property type="entry name" value="Aminotrans_IV"/>
</dbReference>
<dbReference type="InterPro" id="IPR018300">
    <property type="entry name" value="Aminotrans_IV_CS"/>
</dbReference>
<dbReference type="InterPro" id="IPR036038">
    <property type="entry name" value="Aminotransferase-like"/>
</dbReference>
<dbReference type="InterPro" id="IPR005786">
    <property type="entry name" value="B_amino_transII"/>
</dbReference>
<dbReference type="InterPro" id="IPR043132">
    <property type="entry name" value="BCAT-like_C"/>
</dbReference>
<dbReference type="InterPro" id="IPR043131">
    <property type="entry name" value="BCAT-like_N"/>
</dbReference>
<dbReference type="InterPro" id="IPR033939">
    <property type="entry name" value="BCAT_family"/>
</dbReference>
<dbReference type="NCBIfam" id="TIGR01123">
    <property type="entry name" value="ilvE_II"/>
    <property type="match status" value="1"/>
</dbReference>
<dbReference type="NCBIfam" id="NF009897">
    <property type="entry name" value="PRK13357.1"/>
    <property type="match status" value="1"/>
</dbReference>
<dbReference type="PANTHER" id="PTHR11825:SF44">
    <property type="entry name" value="BRANCHED-CHAIN-AMINO-ACID AMINOTRANSFERASE"/>
    <property type="match status" value="1"/>
</dbReference>
<dbReference type="PANTHER" id="PTHR11825">
    <property type="entry name" value="SUBGROUP IIII AMINOTRANSFERASE"/>
    <property type="match status" value="1"/>
</dbReference>
<dbReference type="Pfam" id="PF01063">
    <property type="entry name" value="Aminotran_4"/>
    <property type="match status" value="1"/>
</dbReference>
<dbReference type="PIRSF" id="PIRSF006468">
    <property type="entry name" value="BCAT1"/>
    <property type="match status" value="1"/>
</dbReference>
<dbReference type="SUPFAM" id="SSF56752">
    <property type="entry name" value="D-aminoacid aminotransferase-like PLP-dependent enzymes"/>
    <property type="match status" value="1"/>
</dbReference>
<dbReference type="PROSITE" id="PS00770">
    <property type="entry name" value="AA_TRANSFER_CLASS_4"/>
    <property type="match status" value="1"/>
</dbReference>
<name>ILVE_STAAR</name>
<keyword id="KW-0028">Amino-acid biosynthesis</keyword>
<keyword id="KW-0032">Aminotransferase</keyword>
<keyword id="KW-0100">Branched-chain amino acid biosynthesis</keyword>
<keyword id="KW-0663">Pyridoxal phosphate</keyword>
<keyword id="KW-0808">Transferase</keyword>
<feature type="chain" id="PRO_0000103280" description="Probable branched-chain-amino-acid aminotransferase">
    <location>
        <begin position="1"/>
        <end position="358"/>
    </location>
</feature>
<feature type="modified residue" description="N6-(pyridoxal phosphate)lysine" evidence="1">
    <location>
        <position position="196"/>
    </location>
</feature>
<accession>Q6GJB4</accession>
<reference key="1">
    <citation type="journal article" date="2004" name="Proc. Natl. Acad. Sci. U.S.A.">
        <title>Complete genomes of two clinical Staphylococcus aureus strains: evidence for the rapid evolution of virulence and drug resistance.</title>
        <authorList>
            <person name="Holden M.T.G."/>
            <person name="Feil E.J."/>
            <person name="Lindsay J.A."/>
            <person name="Peacock S.J."/>
            <person name="Day N.P.J."/>
            <person name="Enright M.C."/>
            <person name="Foster T.J."/>
            <person name="Moore C.E."/>
            <person name="Hurst L."/>
            <person name="Atkin R."/>
            <person name="Barron A."/>
            <person name="Bason N."/>
            <person name="Bentley S.D."/>
            <person name="Chillingworth C."/>
            <person name="Chillingworth T."/>
            <person name="Churcher C."/>
            <person name="Clark L."/>
            <person name="Corton C."/>
            <person name="Cronin A."/>
            <person name="Doggett J."/>
            <person name="Dowd L."/>
            <person name="Feltwell T."/>
            <person name="Hance Z."/>
            <person name="Harris B."/>
            <person name="Hauser H."/>
            <person name="Holroyd S."/>
            <person name="Jagels K."/>
            <person name="James K.D."/>
            <person name="Lennard N."/>
            <person name="Line A."/>
            <person name="Mayes R."/>
            <person name="Moule S."/>
            <person name="Mungall K."/>
            <person name="Ormond D."/>
            <person name="Quail M.A."/>
            <person name="Rabbinowitsch E."/>
            <person name="Rutherford K.M."/>
            <person name="Sanders M."/>
            <person name="Sharp S."/>
            <person name="Simmonds M."/>
            <person name="Stevens K."/>
            <person name="Whitehead S."/>
            <person name="Barrell B.G."/>
            <person name="Spratt B.G."/>
            <person name="Parkhill J."/>
        </authorList>
    </citation>
    <scope>NUCLEOTIDE SEQUENCE [LARGE SCALE GENOMIC DNA]</scope>
    <source>
        <strain>MRSA252</strain>
    </source>
</reference>
<gene>
    <name type="primary">ilvE</name>
    <name type="ordered locus">SAR0559</name>
</gene>
<protein>
    <recommendedName>
        <fullName>Probable branched-chain-amino-acid aminotransferase</fullName>
        <shortName>BCAT</shortName>
        <ecNumber>2.6.1.42</ecNumber>
    </recommendedName>
</protein>
<evidence type="ECO:0000250" key="1"/>
<evidence type="ECO:0000305" key="2"/>
<proteinExistence type="inferred from homology"/>